<protein>
    <recommendedName>
        <fullName evidence="1">NAD(P)H-quinone oxidoreductase subunit 3, chloroplastic</fullName>
        <ecNumber evidence="1">7.1.1.-</ecNumber>
    </recommendedName>
    <alternativeName>
        <fullName evidence="1">NAD(P)H dehydrogenase subunit 3</fullName>
    </alternativeName>
    <alternativeName>
        <fullName evidence="1">NADH-plastoquinone oxidoreductase subunit 3</fullName>
    </alternativeName>
</protein>
<feature type="chain" id="PRO_0000362834" description="NAD(P)H-quinone oxidoreductase subunit 3, chloroplastic">
    <location>
        <begin position="1"/>
        <end position="120"/>
    </location>
</feature>
<feature type="transmembrane region" description="Helical" evidence="1">
    <location>
        <begin position="9"/>
        <end position="29"/>
    </location>
</feature>
<feature type="transmembrane region" description="Helical" evidence="1">
    <location>
        <begin position="64"/>
        <end position="84"/>
    </location>
</feature>
<feature type="transmembrane region" description="Helical" evidence="1">
    <location>
        <begin position="88"/>
        <end position="108"/>
    </location>
</feature>
<organism>
    <name type="scientific">Gossypium barbadense</name>
    <name type="common">Sea Island cotton</name>
    <name type="synonym">Hibiscus barbadensis</name>
    <dbReference type="NCBI Taxonomy" id="3634"/>
    <lineage>
        <taxon>Eukaryota</taxon>
        <taxon>Viridiplantae</taxon>
        <taxon>Streptophyta</taxon>
        <taxon>Embryophyta</taxon>
        <taxon>Tracheophyta</taxon>
        <taxon>Spermatophyta</taxon>
        <taxon>Magnoliopsida</taxon>
        <taxon>eudicotyledons</taxon>
        <taxon>Gunneridae</taxon>
        <taxon>Pentapetalae</taxon>
        <taxon>rosids</taxon>
        <taxon>malvids</taxon>
        <taxon>Malvales</taxon>
        <taxon>Malvaceae</taxon>
        <taxon>Malvoideae</taxon>
        <taxon>Gossypium</taxon>
    </lineage>
</organism>
<dbReference type="EC" id="7.1.1.-" evidence="1"/>
<dbReference type="EMBL" id="AP009123">
    <property type="protein sequence ID" value="BAF41252.1"/>
    <property type="molecule type" value="Genomic_DNA"/>
</dbReference>
<dbReference type="RefSeq" id="YP_913192.1">
    <property type="nucleotide sequence ID" value="NC_008641.1"/>
</dbReference>
<dbReference type="SMR" id="A0ZZ40"/>
<dbReference type="GeneID" id="4575196"/>
<dbReference type="GO" id="GO:0009535">
    <property type="term" value="C:chloroplast thylakoid membrane"/>
    <property type="evidence" value="ECO:0007669"/>
    <property type="project" value="UniProtKB-SubCell"/>
</dbReference>
<dbReference type="GO" id="GO:0030964">
    <property type="term" value="C:NADH dehydrogenase complex"/>
    <property type="evidence" value="ECO:0007669"/>
    <property type="project" value="TreeGrafter"/>
</dbReference>
<dbReference type="GO" id="GO:0008137">
    <property type="term" value="F:NADH dehydrogenase (ubiquinone) activity"/>
    <property type="evidence" value="ECO:0007669"/>
    <property type="project" value="InterPro"/>
</dbReference>
<dbReference type="GO" id="GO:0048038">
    <property type="term" value="F:quinone binding"/>
    <property type="evidence" value="ECO:0007669"/>
    <property type="project" value="UniProtKB-KW"/>
</dbReference>
<dbReference type="GO" id="GO:0019684">
    <property type="term" value="P:photosynthesis, light reaction"/>
    <property type="evidence" value="ECO:0007669"/>
    <property type="project" value="UniProtKB-UniRule"/>
</dbReference>
<dbReference type="FunFam" id="1.20.58.1610:FF:000001">
    <property type="entry name" value="NAD(P)H-quinone oxidoreductase subunit 3, chloroplastic"/>
    <property type="match status" value="1"/>
</dbReference>
<dbReference type="Gene3D" id="1.20.58.1610">
    <property type="entry name" value="NADH:ubiquinone/plastoquinone oxidoreductase, chain 3"/>
    <property type="match status" value="1"/>
</dbReference>
<dbReference type="HAMAP" id="MF_01394">
    <property type="entry name" value="NDH1_NuoA"/>
    <property type="match status" value="1"/>
</dbReference>
<dbReference type="InterPro" id="IPR023043">
    <property type="entry name" value="NAD(P)H_OxRDtase_bac/plastid"/>
</dbReference>
<dbReference type="InterPro" id="IPR000440">
    <property type="entry name" value="NADH_UbQ/plastoQ_OxRdtase_su3"/>
</dbReference>
<dbReference type="InterPro" id="IPR038430">
    <property type="entry name" value="NDAH_ubi_oxred_su3_sf"/>
</dbReference>
<dbReference type="PANTHER" id="PTHR11058">
    <property type="entry name" value="NADH-UBIQUINONE OXIDOREDUCTASE CHAIN 3"/>
    <property type="match status" value="1"/>
</dbReference>
<dbReference type="PANTHER" id="PTHR11058:SF9">
    <property type="entry name" value="NADH-UBIQUINONE OXIDOREDUCTASE CHAIN 3"/>
    <property type="match status" value="1"/>
</dbReference>
<dbReference type="Pfam" id="PF00507">
    <property type="entry name" value="Oxidored_q4"/>
    <property type="match status" value="1"/>
</dbReference>
<reference key="1">
    <citation type="journal article" date="2006" name="Genes Genet. Syst.">
        <title>Complete nucleotide sequence of the cotton (Gossypium barbadense L.) chloroplast genome with a comparative analysis of sequences among 9 dicot plants.</title>
        <authorList>
            <person name="Ibrahim R.I.H."/>
            <person name="Azuma J."/>
            <person name="Sakamoto M."/>
        </authorList>
    </citation>
    <scope>NUCLEOTIDE SEQUENCE [LARGE SCALE GENOMIC DNA]</scope>
</reference>
<geneLocation type="chloroplast"/>
<name>NU3C_GOSBA</name>
<sequence length="120" mass="13819">MFLLYEYDIFWAFLIISSAIPILAFLISGVLAPIRKGPEKLSSYESGIEPMGDAWLQFRIRYYMFALVFVVLDVETVFLYPWAMSFDVLGVPVFIEAFIFVLILIVGSVYAWRKGALEWS</sequence>
<accession>A0ZZ40</accession>
<proteinExistence type="inferred from homology"/>
<keyword id="KW-0150">Chloroplast</keyword>
<keyword id="KW-0472">Membrane</keyword>
<keyword id="KW-0520">NAD</keyword>
<keyword id="KW-0521">NADP</keyword>
<keyword id="KW-0934">Plastid</keyword>
<keyword id="KW-0618">Plastoquinone</keyword>
<keyword id="KW-0874">Quinone</keyword>
<keyword id="KW-0793">Thylakoid</keyword>
<keyword id="KW-1278">Translocase</keyword>
<keyword id="KW-0812">Transmembrane</keyword>
<keyword id="KW-1133">Transmembrane helix</keyword>
<keyword id="KW-0813">Transport</keyword>
<comment type="function">
    <text evidence="1">NDH shuttles electrons from NAD(P)H:plastoquinone, via FMN and iron-sulfur (Fe-S) centers, to quinones in the photosynthetic chain and possibly in a chloroplast respiratory chain. The immediate electron acceptor for the enzyme in this species is believed to be plastoquinone. Couples the redox reaction to proton translocation, and thus conserves the redox energy in a proton gradient.</text>
</comment>
<comment type="catalytic activity">
    <reaction evidence="1">
        <text>a plastoquinone + NADH + (n+1) H(+)(in) = a plastoquinol + NAD(+) + n H(+)(out)</text>
        <dbReference type="Rhea" id="RHEA:42608"/>
        <dbReference type="Rhea" id="RHEA-COMP:9561"/>
        <dbReference type="Rhea" id="RHEA-COMP:9562"/>
        <dbReference type="ChEBI" id="CHEBI:15378"/>
        <dbReference type="ChEBI" id="CHEBI:17757"/>
        <dbReference type="ChEBI" id="CHEBI:57540"/>
        <dbReference type="ChEBI" id="CHEBI:57945"/>
        <dbReference type="ChEBI" id="CHEBI:62192"/>
    </reaction>
</comment>
<comment type="catalytic activity">
    <reaction evidence="1">
        <text>a plastoquinone + NADPH + (n+1) H(+)(in) = a plastoquinol + NADP(+) + n H(+)(out)</text>
        <dbReference type="Rhea" id="RHEA:42612"/>
        <dbReference type="Rhea" id="RHEA-COMP:9561"/>
        <dbReference type="Rhea" id="RHEA-COMP:9562"/>
        <dbReference type="ChEBI" id="CHEBI:15378"/>
        <dbReference type="ChEBI" id="CHEBI:17757"/>
        <dbReference type="ChEBI" id="CHEBI:57783"/>
        <dbReference type="ChEBI" id="CHEBI:58349"/>
        <dbReference type="ChEBI" id="CHEBI:62192"/>
    </reaction>
</comment>
<comment type="subunit">
    <text evidence="1">NDH is composed of at least 16 different subunits, 5 of which are encoded in the nucleus.</text>
</comment>
<comment type="subcellular location">
    <subcellularLocation>
        <location evidence="1">Plastid</location>
        <location evidence="1">Chloroplast thylakoid membrane</location>
        <topology evidence="1">Multi-pass membrane protein</topology>
    </subcellularLocation>
</comment>
<comment type="similarity">
    <text evidence="1">Belongs to the complex I subunit 3 family.</text>
</comment>
<gene>
    <name evidence="1" type="primary">ndhC</name>
</gene>
<evidence type="ECO:0000255" key="1">
    <source>
        <dbReference type="HAMAP-Rule" id="MF_01394"/>
    </source>
</evidence>